<protein>
    <recommendedName>
        <fullName evidence="1">Glutamate racemase</fullName>
        <ecNumber evidence="1">5.1.1.3</ecNumber>
    </recommendedName>
</protein>
<keyword id="KW-0133">Cell shape</keyword>
<keyword id="KW-0961">Cell wall biogenesis/degradation</keyword>
<keyword id="KW-0413">Isomerase</keyword>
<keyword id="KW-0573">Peptidoglycan synthesis</keyword>
<sequence>MDNRPIGVLDSGLGGLTVLKKVIEKMPNESTIFIGDQANMPYGDRSREEIISLTRDSVNFLLSKDVKIIIFGCNTATAVAMATIQKEIPLQIIGVVQSGALAAARTTETKNVAVIGTKATVASHSYLKEIQYRDPEIKVSEFAQPKLAPLAEEDPDEDTKNAVVSESLTPLKNADYDTLVLGCTHYPLLRDEIVAVVGQDKKIVDPADQVAQYTYNVLRRDDLFAESTAPVKHDYYTTGEAKKFTEITRQWMNDDTIVGHHVDAED</sequence>
<gene>
    <name evidence="1" type="primary">murI</name>
    <name type="ordered locus">LJ_0482</name>
</gene>
<feature type="chain" id="PRO_1000047576" description="Glutamate racemase">
    <location>
        <begin position="1"/>
        <end position="266"/>
    </location>
</feature>
<feature type="active site" description="Proton donor/acceptor" evidence="1">
    <location>
        <position position="73"/>
    </location>
</feature>
<feature type="active site" description="Proton donor/acceptor" evidence="1">
    <location>
        <position position="183"/>
    </location>
</feature>
<feature type="binding site" evidence="1">
    <location>
        <begin position="10"/>
        <end position="11"/>
    </location>
    <ligand>
        <name>substrate</name>
    </ligand>
</feature>
<feature type="binding site" evidence="1">
    <location>
        <begin position="42"/>
        <end position="43"/>
    </location>
    <ligand>
        <name>substrate</name>
    </ligand>
</feature>
<feature type="binding site" evidence="1">
    <location>
        <begin position="74"/>
        <end position="75"/>
    </location>
    <ligand>
        <name>substrate</name>
    </ligand>
</feature>
<feature type="binding site" evidence="1">
    <location>
        <begin position="184"/>
        <end position="185"/>
    </location>
    <ligand>
        <name>substrate</name>
    </ligand>
</feature>
<comment type="function">
    <text evidence="1">Provides the (R)-glutamate required for cell wall biosynthesis.</text>
</comment>
<comment type="catalytic activity">
    <reaction evidence="1">
        <text>L-glutamate = D-glutamate</text>
        <dbReference type="Rhea" id="RHEA:12813"/>
        <dbReference type="ChEBI" id="CHEBI:29985"/>
        <dbReference type="ChEBI" id="CHEBI:29986"/>
        <dbReference type="EC" id="5.1.1.3"/>
    </reaction>
</comment>
<comment type="pathway">
    <text evidence="1">Cell wall biogenesis; peptidoglycan biosynthesis.</text>
</comment>
<comment type="similarity">
    <text evidence="1">Belongs to the aspartate/glutamate racemases family.</text>
</comment>
<accession>Q74KU5</accession>
<reference key="1">
    <citation type="journal article" date="2004" name="Proc. Natl. Acad. Sci. U.S.A.">
        <title>The genome sequence of the probiotic intestinal bacterium Lactobacillus johnsonii NCC 533.</title>
        <authorList>
            <person name="Pridmore R.D."/>
            <person name="Berger B."/>
            <person name="Desiere F."/>
            <person name="Vilanova D."/>
            <person name="Barretto C."/>
            <person name="Pittet A.-C."/>
            <person name="Zwahlen M.-C."/>
            <person name="Rouvet M."/>
            <person name="Altermann E."/>
            <person name="Barrangou R."/>
            <person name="Mollet B."/>
            <person name="Mercenier A."/>
            <person name="Klaenhammer T."/>
            <person name="Arigoni F."/>
            <person name="Schell M.A."/>
        </authorList>
    </citation>
    <scope>NUCLEOTIDE SEQUENCE [LARGE SCALE GENOMIC DNA]</scope>
    <source>
        <strain>CNCM I-1225 / La1 / NCC 533</strain>
    </source>
</reference>
<organism>
    <name type="scientific">Lactobacillus johnsonii (strain CNCM I-12250 / La1 / NCC 533)</name>
    <dbReference type="NCBI Taxonomy" id="257314"/>
    <lineage>
        <taxon>Bacteria</taxon>
        <taxon>Bacillati</taxon>
        <taxon>Bacillota</taxon>
        <taxon>Bacilli</taxon>
        <taxon>Lactobacillales</taxon>
        <taxon>Lactobacillaceae</taxon>
        <taxon>Lactobacillus</taxon>
    </lineage>
</organism>
<name>MURI_LACJO</name>
<proteinExistence type="inferred from homology"/>
<evidence type="ECO:0000255" key="1">
    <source>
        <dbReference type="HAMAP-Rule" id="MF_00258"/>
    </source>
</evidence>
<dbReference type="EC" id="5.1.1.3" evidence="1"/>
<dbReference type="EMBL" id="AE017198">
    <property type="protein sequence ID" value="AAS08474.1"/>
    <property type="molecule type" value="Genomic_DNA"/>
</dbReference>
<dbReference type="RefSeq" id="WP_004896797.1">
    <property type="nucleotide sequence ID" value="NC_005362.1"/>
</dbReference>
<dbReference type="SMR" id="Q74KU5"/>
<dbReference type="GeneID" id="83569910"/>
<dbReference type="KEGG" id="ljo:LJ_0482"/>
<dbReference type="eggNOG" id="COG0796">
    <property type="taxonomic scope" value="Bacteria"/>
</dbReference>
<dbReference type="HOGENOM" id="CLU_052344_0_2_9"/>
<dbReference type="UniPathway" id="UPA00219"/>
<dbReference type="Proteomes" id="UP000000581">
    <property type="component" value="Chromosome"/>
</dbReference>
<dbReference type="GO" id="GO:0008881">
    <property type="term" value="F:glutamate racemase activity"/>
    <property type="evidence" value="ECO:0007669"/>
    <property type="project" value="UniProtKB-UniRule"/>
</dbReference>
<dbReference type="GO" id="GO:0071555">
    <property type="term" value="P:cell wall organization"/>
    <property type="evidence" value="ECO:0007669"/>
    <property type="project" value="UniProtKB-KW"/>
</dbReference>
<dbReference type="GO" id="GO:0009252">
    <property type="term" value="P:peptidoglycan biosynthetic process"/>
    <property type="evidence" value="ECO:0007669"/>
    <property type="project" value="UniProtKB-UniRule"/>
</dbReference>
<dbReference type="GO" id="GO:0008360">
    <property type="term" value="P:regulation of cell shape"/>
    <property type="evidence" value="ECO:0007669"/>
    <property type="project" value="UniProtKB-KW"/>
</dbReference>
<dbReference type="FunFam" id="3.40.50.1860:FF:000001">
    <property type="entry name" value="Glutamate racemase"/>
    <property type="match status" value="1"/>
</dbReference>
<dbReference type="Gene3D" id="3.40.50.1860">
    <property type="match status" value="2"/>
</dbReference>
<dbReference type="HAMAP" id="MF_00258">
    <property type="entry name" value="Glu_racemase"/>
    <property type="match status" value="1"/>
</dbReference>
<dbReference type="InterPro" id="IPR015942">
    <property type="entry name" value="Asp/Glu/hydantoin_racemase"/>
</dbReference>
<dbReference type="InterPro" id="IPR001920">
    <property type="entry name" value="Asp/Glu_race"/>
</dbReference>
<dbReference type="InterPro" id="IPR033134">
    <property type="entry name" value="Asp/Glu_racemase_AS_2"/>
</dbReference>
<dbReference type="InterPro" id="IPR004391">
    <property type="entry name" value="Glu_race"/>
</dbReference>
<dbReference type="NCBIfam" id="TIGR00067">
    <property type="entry name" value="glut_race"/>
    <property type="match status" value="1"/>
</dbReference>
<dbReference type="PANTHER" id="PTHR21198">
    <property type="entry name" value="GLUTAMATE RACEMASE"/>
    <property type="match status" value="1"/>
</dbReference>
<dbReference type="PANTHER" id="PTHR21198:SF2">
    <property type="entry name" value="GLUTAMATE RACEMASE"/>
    <property type="match status" value="1"/>
</dbReference>
<dbReference type="Pfam" id="PF01177">
    <property type="entry name" value="Asp_Glu_race"/>
    <property type="match status" value="1"/>
</dbReference>
<dbReference type="SUPFAM" id="SSF53681">
    <property type="entry name" value="Aspartate/glutamate racemase"/>
    <property type="match status" value="2"/>
</dbReference>
<dbReference type="PROSITE" id="PS00924">
    <property type="entry name" value="ASP_GLU_RACEMASE_2"/>
    <property type="match status" value="1"/>
</dbReference>